<evidence type="ECO:0000250" key="1"/>
<evidence type="ECO:0000250" key="2">
    <source>
        <dbReference type="UniProtKB" id="P05317"/>
    </source>
</evidence>
<evidence type="ECO:0000255" key="3"/>
<evidence type="ECO:0000256" key="4">
    <source>
        <dbReference type="SAM" id="MobiDB-lite"/>
    </source>
</evidence>
<evidence type="ECO:0000305" key="5"/>
<sequence>MGGKSANKAGYFDKLKGLLEDYRSIFIVSVDNVSSQQMHEIRQSLRGEAVVLMGKNTMVRRALKTFVADTPEYERLLPFVKGNVGFVFTNGDLKEVRDKILANKVAAPARAGAIAPADVWIPAGNTGMEPGKTSFFQALGVPTKIARGTIEITTDLKLVEAGAKVGPSEATLLNMLNISPFTYGMGIAQVYDQGNTFPSDVLDISEEQLLKAFSTAITTIASLSLALNFPTLPSVIHSVVNAYKKVLAVAIETEISWPEIEELKDRIANPEAYASAAPAASTEAAPAAGKAEEKEEEKEESDEDDGGFGGLFD</sequence>
<keyword id="KW-0963">Cytoplasm</keyword>
<keyword id="KW-0597">Phosphoprotein</keyword>
<keyword id="KW-1185">Reference proteome</keyword>
<keyword id="KW-0687">Ribonucleoprotein</keyword>
<keyword id="KW-0689">Ribosomal protein</keyword>
<feature type="chain" id="PRO_0000154783" description="Large ribosomal subunit protein uL10">
    <location>
        <begin position="1"/>
        <end position="313"/>
    </location>
</feature>
<feature type="region of interest" description="Disordered" evidence="4">
    <location>
        <begin position="274"/>
        <end position="313"/>
    </location>
</feature>
<feature type="compositionally biased region" description="Low complexity" evidence="4">
    <location>
        <begin position="274"/>
        <end position="289"/>
    </location>
</feature>
<feature type="compositionally biased region" description="Acidic residues" evidence="4">
    <location>
        <begin position="294"/>
        <end position="306"/>
    </location>
</feature>
<feature type="modified residue" description="Phosphoserine; by CK1" evidence="3">
    <location>
        <position position="301"/>
    </location>
</feature>
<name>RLA0_NEUCR</name>
<dbReference type="EMBL" id="AF361225">
    <property type="protein sequence ID" value="AAK48941.1"/>
    <property type="molecule type" value="mRNA"/>
</dbReference>
<dbReference type="EMBL" id="AF361226">
    <property type="protein sequence ID" value="AAK48942.1"/>
    <property type="molecule type" value="Genomic_DNA"/>
</dbReference>
<dbReference type="EMBL" id="CM002236">
    <property type="protein sequence ID" value="ESA44180.1"/>
    <property type="molecule type" value="Genomic_DNA"/>
</dbReference>
<dbReference type="EMBL" id="CM002236">
    <property type="protein sequence ID" value="ESA44181.1"/>
    <property type="molecule type" value="Genomic_DNA"/>
</dbReference>
<dbReference type="RefSeq" id="XP_011393164.1">
    <property type="nucleotide sequence ID" value="XM_011394862.1"/>
</dbReference>
<dbReference type="RefSeq" id="XP_011393165.1">
    <property type="nucleotide sequence ID" value="XM_011394863.1"/>
</dbReference>
<dbReference type="SMR" id="Q96TJ5"/>
<dbReference type="FunCoup" id="Q96TJ5">
    <property type="interactions" value="1298"/>
</dbReference>
<dbReference type="STRING" id="367110.Q96TJ5"/>
<dbReference type="PaxDb" id="5141-EFNCRP00000007341"/>
<dbReference type="EnsemblFungi" id="ESA44180">
    <property type="protein sequence ID" value="ESA44180"/>
    <property type="gene ID" value="NCU07408"/>
</dbReference>
<dbReference type="EnsemblFungi" id="ESA44181">
    <property type="protein sequence ID" value="ESA44181"/>
    <property type="gene ID" value="NCU07408"/>
</dbReference>
<dbReference type="GeneID" id="3874330"/>
<dbReference type="KEGG" id="ncr:NCU07408"/>
<dbReference type="VEuPathDB" id="FungiDB:NCU07408"/>
<dbReference type="HOGENOM" id="CLU_053173_1_1_1"/>
<dbReference type="InParanoid" id="Q96TJ5"/>
<dbReference type="OMA" id="DMNPFKL"/>
<dbReference type="OrthoDB" id="10259902at2759"/>
<dbReference type="Proteomes" id="UP000001805">
    <property type="component" value="Chromosome 1, Linkage Group I"/>
</dbReference>
<dbReference type="GO" id="GO:0022625">
    <property type="term" value="C:cytosolic large ribosomal subunit"/>
    <property type="evidence" value="ECO:0000318"/>
    <property type="project" value="GO_Central"/>
</dbReference>
<dbReference type="GO" id="GO:0070180">
    <property type="term" value="F:large ribosomal subunit rRNA binding"/>
    <property type="evidence" value="ECO:0000318"/>
    <property type="project" value="GO_Central"/>
</dbReference>
<dbReference type="GO" id="GO:0003735">
    <property type="term" value="F:structural constituent of ribosome"/>
    <property type="evidence" value="ECO:0000318"/>
    <property type="project" value="GO_Central"/>
</dbReference>
<dbReference type="GO" id="GO:0002181">
    <property type="term" value="P:cytoplasmic translation"/>
    <property type="evidence" value="ECO:0000318"/>
    <property type="project" value="GO_Central"/>
</dbReference>
<dbReference type="GO" id="GO:0000027">
    <property type="term" value="P:ribosomal large subunit assembly"/>
    <property type="evidence" value="ECO:0007669"/>
    <property type="project" value="EnsemblFungi"/>
</dbReference>
<dbReference type="CDD" id="cd05795">
    <property type="entry name" value="Ribosomal_P0_L10e"/>
    <property type="match status" value="1"/>
</dbReference>
<dbReference type="FunFam" id="3.30.70.1730:FF:000002">
    <property type="entry name" value="60S acidic ribosomal protein P0"/>
    <property type="match status" value="1"/>
</dbReference>
<dbReference type="FunFam" id="3.90.105.20:FF:000001">
    <property type="entry name" value="60S acidic ribosomal protein P0"/>
    <property type="match status" value="1"/>
</dbReference>
<dbReference type="Gene3D" id="3.30.70.1730">
    <property type="match status" value="1"/>
</dbReference>
<dbReference type="Gene3D" id="3.90.105.20">
    <property type="match status" value="1"/>
</dbReference>
<dbReference type="InterPro" id="IPR050323">
    <property type="entry name" value="Ribosomal_protein_uL10"/>
</dbReference>
<dbReference type="InterPro" id="IPR001790">
    <property type="entry name" value="Ribosomal_uL10"/>
</dbReference>
<dbReference type="InterPro" id="IPR040637">
    <property type="entry name" value="Ribosomal_uL10-like_insert"/>
</dbReference>
<dbReference type="InterPro" id="IPR043164">
    <property type="entry name" value="Ribosomal_uL10-like_insert_sf"/>
</dbReference>
<dbReference type="InterPro" id="IPR043141">
    <property type="entry name" value="Ribosomal_uL10-like_sf"/>
</dbReference>
<dbReference type="InterPro" id="IPR030670">
    <property type="entry name" value="uL10_eukaryotes"/>
</dbReference>
<dbReference type="PANTHER" id="PTHR45699">
    <property type="entry name" value="60S ACIDIC RIBOSOMAL PROTEIN P0"/>
    <property type="match status" value="1"/>
</dbReference>
<dbReference type="PANTHER" id="PTHR45699:SF3">
    <property type="entry name" value="LARGE RIBOSOMAL SUBUNIT PROTEIN UL10"/>
    <property type="match status" value="1"/>
</dbReference>
<dbReference type="Pfam" id="PF00428">
    <property type="entry name" value="Ribosomal_60s"/>
    <property type="match status" value="1"/>
</dbReference>
<dbReference type="Pfam" id="PF00466">
    <property type="entry name" value="Ribosomal_L10"/>
    <property type="match status" value="1"/>
</dbReference>
<dbReference type="Pfam" id="PF17777">
    <property type="entry name" value="RL10P_insert"/>
    <property type="match status" value="1"/>
</dbReference>
<dbReference type="PIRSF" id="PIRSF039087">
    <property type="entry name" value="L10E"/>
    <property type="match status" value="1"/>
</dbReference>
<dbReference type="SUPFAM" id="SSF160369">
    <property type="entry name" value="Ribosomal protein L10-like"/>
    <property type="match status" value="1"/>
</dbReference>
<protein>
    <recommendedName>
        <fullName evidence="5">Large ribosomal subunit protein uL10</fullName>
    </recommendedName>
    <alternativeName>
        <fullName>60S acidic ribosomal protein P0</fullName>
    </alternativeName>
</protein>
<gene>
    <name type="primary">p0</name>
    <name type="synonym">crpp0</name>
    <name type="ORF">NCU07408</name>
</gene>
<proteinExistence type="evidence at transcript level"/>
<reference key="1">
    <citation type="submission" date="2001-03" db="EMBL/GenBank/DDBJ databases">
        <title>Cloning and characterization of cytoplasmic ribosomal protein P0 from Neurospora crassa.</title>
        <authorList>
            <person name="Krokowski D."/>
            <person name="Tchorzewski M."/>
            <person name="Grankowski N."/>
        </authorList>
    </citation>
    <scope>NUCLEOTIDE SEQUENCE [MRNA]</scope>
</reference>
<reference key="2">
    <citation type="journal article" date="2003" name="Nature">
        <title>The genome sequence of the filamentous fungus Neurospora crassa.</title>
        <authorList>
            <person name="Galagan J.E."/>
            <person name="Calvo S.E."/>
            <person name="Borkovich K.A."/>
            <person name="Selker E.U."/>
            <person name="Read N.D."/>
            <person name="Jaffe D.B."/>
            <person name="FitzHugh W."/>
            <person name="Ma L.-J."/>
            <person name="Smirnov S."/>
            <person name="Purcell S."/>
            <person name="Rehman B."/>
            <person name="Elkins T."/>
            <person name="Engels R."/>
            <person name="Wang S."/>
            <person name="Nielsen C.B."/>
            <person name="Butler J."/>
            <person name="Endrizzi M."/>
            <person name="Qui D."/>
            <person name="Ianakiev P."/>
            <person name="Bell-Pedersen D."/>
            <person name="Nelson M.A."/>
            <person name="Werner-Washburne M."/>
            <person name="Selitrennikoff C.P."/>
            <person name="Kinsey J.A."/>
            <person name="Braun E.L."/>
            <person name="Zelter A."/>
            <person name="Schulte U."/>
            <person name="Kothe G.O."/>
            <person name="Jedd G."/>
            <person name="Mewes H.-W."/>
            <person name="Staben C."/>
            <person name="Marcotte E."/>
            <person name="Greenberg D."/>
            <person name="Roy A."/>
            <person name="Foley K."/>
            <person name="Naylor J."/>
            <person name="Stange-Thomann N."/>
            <person name="Barrett R."/>
            <person name="Gnerre S."/>
            <person name="Kamal M."/>
            <person name="Kamvysselis M."/>
            <person name="Mauceli E.W."/>
            <person name="Bielke C."/>
            <person name="Rudd S."/>
            <person name="Frishman D."/>
            <person name="Krystofova S."/>
            <person name="Rasmussen C."/>
            <person name="Metzenberg R.L."/>
            <person name="Perkins D.D."/>
            <person name="Kroken S."/>
            <person name="Cogoni C."/>
            <person name="Macino G."/>
            <person name="Catcheside D.E.A."/>
            <person name="Li W."/>
            <person name="Pratt R.J."/>
            <person name="Osmani S.A."/>
            <person name="DeSouza C.P.C."/>
            <person name="Glass N.L."/>
            <person name="Orbach M.J."/>
            <person name="Berglund J.A."/>
            <person name="Voelker R."/>
            <person name="Yarden O."/>
            <person name="Plamann M."/>
            <person name="Seiler S."/>
            <person name="Dunlap J.C."/>
            <person name="Radford A."/>
            <person name="Aramayo R."/>
            <person name="Natvig D.O."/>
            <person name="Alex L.A."/>
            <person name="Mannhaupt G."/>
            <person name="Ebbole D.J."/>
            <person name="Freitag M."/>
            <person name="Paulsen I."/>
            <person name="Sachs M.S."/>
            <person name="Lander E.S."/>
            <person name="Nusbaum C."/>
            <person name="Birren B.W."/>
        </authorList>
    </citation>
    <scope>NUCLEOTIDE SEQUENCE [LARGE SCALE GENOMIC DNA]</scope>
    <source>
        <strain>ATCC 24698 / 74-OR23-1A / CBS 708.71 / DSM 1257 / FGSC 987</strain>
    </source>
</reference>
<accession>Q96TJ5</accession>
<accession>Q7RVR2</accession>
<accession>V5IRN4</accession>
<comment type="function">
    <text evidence="2">Component of the ribosome, a large ribonucleoprotein complex responsible for the synthesis of proteins in the cell. The small ribosomal subunit (SSU) binds messenger RNAs (mRNAs) and translates the encoded message by selecting cognate aminoacyl-transfer RNA (tRNA) molecules. The large subunit (LSU) contains the ribosomal catalytic site termed the peptidyl transferase center (PTC), which catalyzes the formation of peptide bonds, thereby polymerizing the amino acids delivered by tRNAs into a polypeptide chain. The nascent polypeptides leave the ribosome through a tunnel in the LSU and interact with protein factors that function in enzymatic processing, targeting, and the membrane insertion of nascent chains at the exit of the ribosomal tunnel. uL10 forms part of the P stalk that participates in recruiting G proteins to the ribosome.</text>
</comment>
<comment type="subunit">
    <text evidence="2 5">Component of the large ribosomal subunit (LSU). Mature N.crassa ribosomes consist of a small (40S) and a large (60S) subunit. The 40S small subunit contains 1 molecule of ribosomal RNA (18S rRNA) and at least 32 different proteins. The large 60S subunit contains 3 rRNA molecules (26S, 5.8S and 5S rRNA) and at least 42 different proteins (Probable). The acidic ribosomal P-proteins form the stalk structure of the 60S subunit. They are organized as a pentameric complex in which uL10/P0 interacts with 2 heterodimers of P1 and P2 proteins. uL10 directly interacts with 28S rRNA (By similarity).</text>
</comment>
<comment type="subcellular location">
    <subcellularLocation>
        <location evidence="2">Cytoplasm</location>
    </subcellularLocation>
</comment>
<comment type="PTM">
    <text evidence="1">Phosphorylated.</text>
</comment>
<comment type="similarity">
    <text evidence="5">Belongs to the universal ribosomal protein uL10 family.</text>
</comment>
<organism>
    <name type="scientific">Neurospora crassa (strain ATCC 24698 / 74-OR23-1A / CBS 708.71 / DSM 1257 / FGSC 987)</name>
    <dbReference type="NCBI Taxonomy" id="367110"/>
    <lineage>
        <taxon>Eukaryota</taxon>
        <taxon>Fungi</taxon>
        <taxon>Dikarya</taxon>
        <taxon>Ascomycota</taxon>
        <taxon>Pezizomycotina</taxon>
        <taxon>Sordariomycetes</taxon>
        <taxon>Sordariomycetidae</taxon>
        <taxon>Sordariales</taxon>
        <taxon>Sordariaceae</taxon>
        <taxon>Neurospora</taxon>
    </lineage>
</organism>